<name>PIPSL_HUMAN</name>
<comment type="function">
    <text>Has negligible PIP5 kinase activity. Binds to ubiquitinated proteins.</text>
</comment>
<comment type="subcellular location">
    <subcellularLocation>
        <location evidence="4">Cytoplasm</location>
    </subcellularLocation>
</comment>
<comment type="tissue specificity">
    <text evidence="4">Testis-specific.</text>
</comment>
<comment type="miscellaneous">
    <text>PIPSL gene appeared in hominoids by L1-mediated retrotransposition in a hominoid ancestor of a readthrough, intergenically spliced transcript between the PIP5K1A and PSMD4 genes.</text>
</comment>
<comment type="caution">
    <text evidence="5">Could be the product of a pseudogene. Although transcribed, the gene is poorly translated probably due to a deletion in the regulatory region. PubMed:17623810 could not detect the protein by Western blot.</text>
</comment>
<sequence>MASEVPYASGMPIKKIGHRSVDSSGGTTSSALKGAIQLGITHTVGSLSTKPESDVLMQDFHMVESIFFPSEGSNLTPAHHYNAFRFKTYAPVAFRYFWELFGIRPDDYLYSLCSEPLIELCSSGASGSLFYVSSDDEFIVKTVRHKEAEFLQKLLPGYYINLNQNPRTLLPKFYGLYCVQTGGKNIRIVVMNNLLPRSVKMHIKYDLKGSTYRRRASQKEREKPLPTFKDLDFLQDIPDGLFLDADVHNALCKTLQRDCLVLQSFKIMDYSLLMSIHNIDHAQREPLSSETQYSVDTRRPAPQKALYSTAMESIQGEARRGGTMETDDHMGGIPARNSKGERLLLYIGIIDILQSYRFVKKLEHSWKALIHDGDTVSVHRPGFYAEWFQRFMCNTVFKKIPLKPSPSKKLRSGSSFSQRAGSSGNSCITYQPLVSGEHKAQVTTKAEVEPGVHLGCPDVLPQTPPLEEISEGSPTPDPSFSPLVEETLQMLTTSVDNSEYMGNGDFLPTRLQAQQDAVNTVCHSKTRSNPENNVGLITLDNDCEVLTTLTPDTGRILSKLHTVQPKGKITFCMGIHVAHLALKHRQGNNHKIRIIAFVGNPVEDNEKNLVKLAKCLKKEKVNVDIINFGEEEVNTEKLTAFVNTLNGKDGTGSHLVTVPPGPSLADALISFPILAGEGGAMMGLGASDFEFGVDPSADPELALVLRVFMEEQRQRQEEEARQAAAASAAEAGIATTGTEDSDDALLKMTISQQEFGHTGLPDLSSMTEEEKIVCAMQMSLQGAEFGLAESADIDASSAMDTSEPAKEEDDYDVMQDPEFLQSVLENLPGVDPNNEAIRNAVGSLASQATKDSKKDKKEEDKK</sequence>
<protein>
    <recommendedName>
        <fullName>Putative PIP5K1A and PSMD4-like protein</fullName>
        <shortName>PIP5K1A-PSMD4</shortName>
    </recommendedName>
</protein>
<dbReference type="EMBL" id="AL365510">
    <property type="status" value="NOT_ANNOTATED_CDS"/>
    <property type="molecule type" value="Genomic_DNA"/>
</dbReference>
<dbReference type="SMR" id="A2A3N6"/>
<dbReference type="FunCoup" id="A2A3N6">
    <property type="interactions" value="117"/>
</dbReference>
<dbReference type="IntAct" id="A2A3N6">
    <property type="interactions" value="232"/>
</dbReference>
<dbReference type="MINT" id="A2A3N6"/>
<dbReference type="GlyGen" id="A2A3N6">
    <property type="glycosylation" value="2 sites, 1 O-linked glycan (1 site)"/>
</dbReference>
<dbReference type="iPTMnet" id="A2A3N6"/>
<dbReference type="PhosphoSitePlus" id="A2A3N6"/>
<dbReference type="BioMuta" id="HGNC:23733"/>
<dbReference type="jPOST" id="A2A3N6"/>
<dbReference type="MassIVE" id="A2A3N6"/>
<dbReference type="ProteomicsDB" id="288"/>
<dbReference type="Pumba" id="A2A3N6"/>
<dbReference type="AGR" id="HGNC:23733"/>
<dbReference type="GeneCards" id="PIPSL"/>
<dbReference type="HGNC" id="HGNC:23733">
    <property type="gene designation" value="PIPSL"/>
</dbReference>
<dbReference type="neXtProt" id="NX_A2A3N6"/>
<dbReference type="InParanoid" id="A2A3N6"/>
<dbReference type="PAN-GO" id="A2A3N6">
    <property type="GO annotations" value="3 GO annotations based on evolutionary models"/>
</dbReference>
<dbReference type="PhylomeDB" id="A2A3N6"/>
<dbReference type="PathwayCommons" id="A2A3N6"/>
<dbReference type="SignaLink" id="A2A3N6"/>
<dbReference type="ChiTaRS" id="PIPSL">
    <property type="organism name" value="human"/>
</dbReference>
<dbReference type="Pharos" id="A2A3N6">
    <property type="development level" value="Tdark"/>
</dbReference>
<dbReference type="PRO" id="PR:A2A3N6"/>
<dbReference type="Proteomes" id="UP000005640">
    <property type="component" value="Unplaced"/>
</dbReference>
<dbReference type="RNAct" id="A2A3N6">
    <property type="molecule type" value="protein"/>
</dbReference>
<dbReference type="GO" id="GO:0005737">
    <property type="term" value="C:cytoplasm"/>
    <property type="evidence" value="ECO:0007669"/>
    <property type="project" value="UniProtKB-SubCell"/>
</dbReference>
<dbReference type="GO" id="GO:0005886">
    <property type="term" value="C:plasma membrane"/>
    <property type="evidence" value="ECO:0000318"/>
    <property type="project" value="GO_Central"/>
</dbReference>
<dbReference type="GO" id="GO:0016308">
    <property type="term" value="F:1-phosphatidylinositol-4-phosphate 5-kinase activity"/>
    <property type="evidence" value="ECO:0000318"/>
    <property type="project" value="GO_Central"/>
</dbReference>
<dbReference type="GO" id="GO:0046854">
    <property type="term" value="P:phosphatidylinositol phosphate biosynthetic process"/>
    <property type="evidence" value="ECO:0000318"/>
    <property type="project" value="GO_Central"/>
</dbReference>
<dbReference type="CDD" id="cd17306">
    <property type="entry name" value="PIPKc_PIP5K1A_like"/>
    <property type="match status" value="1"/>
</dbReference>
<dbReference type="CDD" id="cd22297">
    <property type="entry name" value="PSMD4_RAZUL"/>
    <property type="match status" value="1"/>
</dbReference>
<dbReference type="CDD" id="cd01452">
    <property type="entry name" value="VWA_26S_proteasome_subunit"/>
    <property type="match status" value="1"/>
</dbReference>
<dbReference type="FunFam" id="3.40.50.410:FF:000005">
    <property type="entry name" value="26S proteasome non-ATPase regulatory subunit 4"/>
    <property type="match status" value="1"/>
</dbReference>
<dbReference type="FunFam" id="6.10.300.40:FF:000001">
    <property type="entry name" value="26S proteasome non-ATPase regulatory subunit 4"/>
    <property type="match status" value="1"/>
</dbReference>
<dbReference type="FunFam" id="3.30.800.10:FF:000001">
    <property type="entry name" value="phosphatidylinositol 4-phosphate 5-kinase type-1 gamma"/>
    <property type="match status" value="1"/>
</dbReference>
<dbReference type="Gene3D" id="6.10.250.380">
    <property type="match status" value="1"/>
</dbReference>
<dbReference type="Gene3D" id="6.10.300.40">
    <property type="match status" value="1"/>
</dbReference>
<dbReference type="Gene3D" id="3.30.810.10">
    <property type="entry name" value="2-Layer Sandwich"/>
    <property type="match status" value="1"/>
</dbReference>
<dbReference type="Gene3D" id="3.30.800.10">
    <property type="entry name" value="Phosphatidylinositol Phosphate Kinase II Beta"/>
    <property type="match status" value="1"/>
</dbReference>
<dbReference type="Gene3D" id="3.40.50.410">
    <property type="entry name" value="von Willebrand factor, type A domain"/>
    <property type="match status" value="1"/>
</dbReference>
<dbReference type="InterPro" id="IPR027483">
    <property type="entry name" value="PInositol-4-P-4/5-kinase_C_sf"/>
</dbReference>
<dbReference type="InterPro" id="IPR002498">
    <property type="entry name" value="PInositol-4-P-4/5-kinase_core"/>
</dbReference>
<dbReference type="InterPro" id="IPR027484">
    <property type="entry name" value="PInositol-4-P-5-kinase_N"/>
</dbReference>
<dbReference type="InterPro" id="IPR023610">
    <property type="entry name" value="PInositol-4/5-P-5/4-kinase"/>
</dbReference>
<dbReference type="InterPro" id="IPR049590">
    <property type="entry name" value="PSMD4_RAZUL-like"/>
</dbReference>
<dbReference type="InterPro" id="IPR002035">
    <property type="entry name" value="VWF_A"/>
</dbReference>
<dbReference type="InterPro" id="IPR036465">
    <property type="entry name" value="vWFA_dom_sf"/>
</dbReference>
<dbReference type="PANTHER" id="PTHR23086">
    <property type="entry name" value="PHOSPHATIDYLINOSITOL-4-PHOSPHATE 5-KINASE"/>
    <property type="match status" value="1"/>
</dbReference>
<dbReference type="PANTHER" id="PTHR23086:SF116">
    <property type="entry name" value="PIP5K1A AND PSMD4-LIKE PROTEIN-RELATED"/>
    <property type="match status" value="1"/>
</dbReference>
<dbReference type="Pfam" id="PF01504">
    <property type="entry name" value="PIP5K"/>
    <property type="match status" value="1"/>
</dbReference>
<dbReference type="Pfam" id="PF13519">
    <property type="entry name" value="VWA_2"/>
    <property type="match status" value="1"/>
</dbReference>
<dbReference type="SMART" id="SM00330">
    <property type="entry name" value="PIPKc"/>
    <property type="match status" value="1"/>
</dbReference>
<dbReference type="SMART" id="SM00327">
    <property type="entry name" value="VWA"/>
    <property type="match status" value="1"/>
</dbReference>
<dbReference type="SUPFAM" id="SSF56104">
    <property type="entry name" value="SAICAR synthase-like"/>
    <property type="match status" value="1"/>
</dbReference>
<dbReference type="SUPFAM" id="SSF53300">
    <property type="entry name" value="vWA-like"/>
    <property type="match status" value="1"/>
</dbReference>
<dbReference type="PROSITE" id="PS51455">
    <property type="entry name" value="PIPK"/>
    <property type="match status" value="1"/>
</dbReference>
<dbReference type="PROSITE" id="PS50234">
    <property type="entry name" value="VWFA"/>
    <property type="match status" value="1"/>
</dbReference>
<evidence type="ECO:0000255" key="1">
    <source>
        <dbReference type="PROSITE-ProRule" id="PRU00219"/>
    </source>
</evidence>
<evidence type="ECO:0000255" key="2">
    <source>
        <dbReference type="PROSITE-ProRule" id="PRU00781"/>
    </source>
</evidence>
<evidence type="ECO:0000256" key="3">
    <source>
        <dbReference type="SAM" id="MobiDB-lite"/>
    </source>
</evidence>
<evidence type="ECO:0000269" key="4">
    <source>
    </source>
</evidence>
<evidence type="ECO:0000305" key="5"/>
<organism>
    <name type="scientific">Homo sapiens</name>
    <name type="common">Human</name>
    <dbReference type="NCBI Taxonomy" id="9606"/>
    <lineage>
        <taxon>Eukaryota</taxon>
        <taxon>Metazoa</taxon>
        <taxon>Chordata</taxon>
        <taxon>Craniata</taxon>
        <taxon>Vertebrata</taxon>
        <taxon>Euteleostomi</taxon>
        <taxon>Mammalia</taxon>
        <taxon>Eutheria</taxon>
        <taxon>Euarchontoglires</taxon>
        <taxon>Primates</taxon>
        <taxon>Haplorrhini</taxon>
        <taxon>Catarrhini</taxon>
        <taxon>Hominidae</taxon>
        <taxon>Homo</taxon>
    </lineage>
</organism>
<accession>A2A3N6</accession>
<accession>Q6NUK8</accession>
<gene>
    <name type="primary">PIPSL</name>
    <name type="synonym">PSMD4P2</name>
</gene>
<reference key="1">
    <citation type="journal article" date="2004" name="Nature">
        <title>The DNA sequence and comparative analysis of human chromosome 10.</title>
        <authorList>
            <person name="Deloukas P."/>
            <person name="Earthrowl M.E."/>
            <person name="Grafham D.V."/>
            <person name="Rubenfield M."/>
            <person name="French L."/>
            <person name="Steward C.A."/>
            <person name="Sims S.K."/>
            <person name="Jones M.C."/>
            <person name="Searle S."/>
            <person name="Scott C."/>
            <person name="Howe K."/>
            <person name="Hunt S.E."/>
            <person name="Andrews T.D."/>
            <person name="Gilbert J.G.R."/>
            <person name="Swarbreck D."/>
            <person name="Ashurst J.L."/>
            <person name="Taylor A."/>
            <person name="Battles J."/>
            <person name="Bird C.P."/>
            <person name="Ainscough R."/>
            <person name="Almeida J.P."/>
            <person name="Ashwell R.I.S."/>
            <person name="Ambrose K.D."/>
            <person name="Babbage A.K."/>
            <person name="Bagguley C.L."/>
            <person name="Bailey J."/>
            <person name="Banerjee R."/>
            <person name="Bates K."/>
            <person name="Beasley H."/>
            <person name="Bray-Allen S."/>
            <person name="Brown A.J."/>
            <person name="Brown J.Y."/>
            <person name="Burford D.C."/>
            <person name="Burrill W."/>
            <person name="Burton J."/>
            <person name="Cahill P."/>
            <person name="Camire D."/>
            <person name="Carter N.P."/>
            <person name="Chapman J.C."/>
            <person name="Clark S.Y."/>
            <person name="Clarke G."/>
            <person name="Clee C.M."/>
            <person name="Clegg S."/>
            <person name="Corby N."/>
            <person name="Coulson A."/>
            <person name="Dhami P."/>
            <person name="Dutta I."/>
            <person name="Dunn M."/>
            <person name="Faulkner L."/>
            <person name="Frankish A."/>
            <person name="Frankland J.A."/>
            <person name="Garner P."/>
            <person name="Garnett J."/>
            <person name="Gribble S."/>
            <person name="Griffiths C."/>
            <person name="Grocock R."/>
            <person name="Gustafson E."/>
            <person name="Hammond S."/>
            <person name="Harley J.L."/>
            <person name="Hart E."/>
            <person name="Heath P.D."/>
            <person name="Ho T.P."/>
            <person name="Hopkins B."/>
            <person name="Horne J."/>
            <person name="Howden P.J."/>
            <person name="Huckle E."/>
            <person name="Hynds C."/>
            <person name="Johnson C."/>
            <person name="Johnson D."/>
            <person name="Kana A."/>
            <person name="Kay M."/>
            <person name="Kimberley A.M."/>
            <person name="Kershaw J.K."/>
            <person name="Kokkinaki M."/>
            <person name="Laird G.K."/>
            <person name="Lawlor S."/>
            <person name="Lee H.M."/>
            <person name="Leongamornlert D.A."/>
            <person name="Laird G."/>
            <person name="Lloyd C."/>
            <person name="Lloyd D.M."/>
            <person name="Loveland J."/>
            <person name="Lovell J."/>
            <person name="McLaren S."/>
            <person name="McLay K.E."/>
            <person name="McMurray A."/>
            <person name="Mashreghi-Mohammadi M."/>
            <person name="Matthews L."/>
            <person name="Milne S."/>
            <person name="Nickerson T."/>
            <person name="Nguyen M."/>
            <person name="Overton-Larty E."/>
            <person name="Palmer S.A."/>
            <person name="Pearce A.V."/>
            <person name="Peck A.I."/>
            <person name="Pelan S."/>
            <person name="Phillimore B."/>
            <person name="Porter K."/>
            <person name="Rice C.M."/>
            <person name="Rogosin A."/>
            <person name="Ross M.T."/>
            <person name="Sarafidou T."/>
            <person name="Sehra H.K."/>
            <person name="Shownkeen R."/>
            <person name="Skuce C.D."/>
            <person name="Smith M."/>
            <person name="Standring L."/>
            <person name="Sycamore N."/>
            <person name="Tester J."/>
            <person name="Thorpe A."/>
            <person name="Torcasso W."/>
            <person name="Tracey A."/>
            <person name="Tromans A."/>
            <person name="Tsolas J."/>
            <person name="Wall M."/>
            <person name="Walsh J."/>
            <person name="Wang H."/>
            <person name="Weinstock K."/>
            <person name="West A.P."/>
            <person name="Willey D.L."/>
            <person name="Whitehead S.L."/>
            <person name="Wilming L."/>
            <person name="Wray P.W."/>
            <person name="Young L."/>
            <person name="Chen Y."/>
            <person name="Lovering R.C."/>
            <person name="Moschonas N.K."/>
            <person name="Siebert R."/>
            <person name="Fechtel K."/>
            <person name="Bentley D."/>
            <person name="Durbin R.M."/>
            <person name="Hubbard T."/>
            <person name="Doucette-Stamm L."/>
            <person name="Beck S."/>
            <person name="Smith D.R."/>
            <person name="Rogers J."/>
        </authorList>
    </citation>
    <scope>NUCLEOTIDE SEQUENCE [LARGE SCALE GENOMIC DNA]</scope>
</reference>
<reference key="2">
    <citation type="journal article" date="2007" name="Genome Res.">
        <title>A novel testis ubiquitin-binding protein gene arose by exon shuffling in hominoids.</title>
        <authorList>
            <person name="Babushok D.V."/>
            <person name="Ohshima K."/>
            <person name="Ostertag E.M."/>
            <person name="Chen X."/>
            <person name="Wang Y."/>
            <person name="Mandal P.K."/>
            <person name="Okada N."/>
            <person name="Abrams C.S."/>
            <person name="Kazazian H.H. Jr."/>
        </authorList>
    </citation>
    <scope>SUBCELLULAR LOCATION</scope>
    <scope>TISSUE SPECIFICITY</scope>
    <scope>GENE EVOLUTION</scope>
</reference>
<feature type="chain" id="PRO_0000347057" description="Putative PIP5K1A and PSMD4-like protein">
    <location>
        <begin position="1"/>
        <end position="862"/>
    </location>
</feature>
<feature type="domain" description="PIPK" evidence="2">
    <location>
        <begin position="28"/>
        <end position="396"/>
    </location>
</feature>
<feature type="domain" description="VWFA" evidence="1">
    <location>
        <begin position="490"/>
        <end position="673"/>
    </location>
</feature>
<feature type="domain" description="UIM 1" evidence="5">
    <location>
        <begin position="696"/>
        <end position="715"/>
    </location>
</feature>
<feature type="domain" description="UIM 2" evidence="5">
    <location>
        <begin position="766"/>
        <end position="783"/>
    </location>
</feature>
<feature type="region of interest" description="Disordered" evidence="3">
    <location>
        <begin position="404"/>
        <end position="424"/>
    </location>
</feature>
<feature type="region of interest" description="Disordered" evidence="3">
    <location>
        <begin position="453"/>
        <end position="481"/>
    </location>
</feature>
<feature type="region of interest" description="Disordered" evidence="3">
    <location>
        <begin position="716"/>
        <end position="740"/>
    </location>
</feature>
<feature type="region of interest" description="Disordered" evidence="3">
    <location>
        <begin position="826"/>
        <end position="862"/>
    </location>
</feature>
<feature type="compositionally biased region" description="Low complexity" evidence="3">
    <location>
        <begin position="412"/>
        <end position="424"/>
    </location>
</feature>
<feature type="compositionally biased region" description="Low complexity" evidence="3">
    <location>
        <begin position="722"/>
        <end position="731"/>
    </location>
</feature>
<feature type="compositionally biased region" description="Basic and acidic residues" evidence="3">
    <location>
        <begin position="850"/>
        <end position="862"/>
    </location>
</feature>
<proteinExistence type="uncertain"/>
<keyword id="KW-0963">Cytoplasm</keyword>
<keyword id="KW-1267">Proteomics identification</keyword>
<keyword id="KW-1185">Reference proteome</keyword>
<keyword id="KW-0677">Repeat</keyword>